<comment type="function">
    <text evidence="1">The glycine cleavage system catalyzes the degradation of glycine. The P protein binds the alpha-amino group of glycine through its pyridoxal phosphate cofactor; CO(2) is released and the remaining methylamine moiety is then transferred to the lipoamide cofactor of the H protein.</text>
</comment>
<comment type="catalytic activity">
    <reaction evidence="1">
        <text>N(6)-[(R)-lipoyl]-L-lysyl-[glycine-cleavage complex H protein] + glycine + H(+) = N(6)-[(R)-S(8)-aminomethyldihydrolipoyl]-L-lysyl-[glycine-cleavage complex H protein] + CO2</text>
        <dbReference type="Rhea" id="RHEA:24304"/>
        <dbReference type="Rhea" id="RHEA-COMP:10494"/>
        <dbReference type="Rhea" id="RHEA-COMP:10495"/>
        <dbReference type="ChEBI" id="CHEBI:15378"/>
        <dbReference type="ChEBI" id="CHEBI:16526"/>
        <dbReference type="ChEBI" id="CHEBI:57305"/>
        <dbReference type="ChEBI" id="CHEBI:83099"/>
        <dbReference type="ChEBI" id="CHEBI:83143"/>
        <dbReference type="EC" id="1.4.4.2"/>
    </reaction>
</comment>
<comment type="cofactor">
    <cofactor evidence="1">
        <name>pyridoxal 5'-phosphate</name>
        <dbReference type="ChEBI" id="CHEBI:597326"/>
    </cofactor>
</comment>
<comment type="subunit">
    <text evidence="1">The glycine cleavage system is composed of four proteins: P, T, L and H. In this organism, the P 'protein' is a heterodimer of two subunits.</text>
</comment>
<comment type="similarity">
    <text evidence="1">Belongs to the GcvP family. C-terminal subunit subfamily.</text>
</comment>
<reference key="1">
    <citation type="submission" date="2007-12" db="EMBL/GenBank/DDBJ databases">
        <title>Complete sequence of chromosome of Francisella philomiragia subsp. philomiragia ATCC 25017.</title>
        <authorList>
            <consortium name="US DOE Joint Genome Institute"/>
            <person name="Copeland A."/>
            <person name="Lucas S."/>
            <person name="Lapidus A."/>
            <person name="Barry K."/>
            <person name="Detter J.C."/>
            <person name="Glavina del Rio T."/>
            <person name="Hammon N."/>
            <person name="Israni S."/>
            <person name="Dalin E."/>
            <person name="Tice H."/>
            <person name="Pitluck S."/>
            <person name="Chain P."/>
            <person name="Malfatti S."/>
            <person name="Shin M."/>
            <person name="Vergez L."/>
            <person name="Schmutz J."/>
            <person name="Larimer F."/>
            <person name="Land M."/>
            <person name="Hauser L."/>
            <person name="Richardson P."/>
        </authorList>
    </citation>
    <scope>NUCLEOTIDE SEQUENCE [LARGE SCALE GENOMIC DNA]</scope>
    <source>
        <strain>ATCC 25017 / CCUG 19701 / FSC 153 / O#319-036</strain>
    </source>
</reference>
<proteinExistence type="inferred from homology"/>
<gene>
    <name evidence="1" type="primary">gcvPB</name>
    <name type="ordered locus">Fphi_0337</name>
</gene>
<dbReference type="EC" id="1.4.4.2" evidence="1"/>
<dbReference type="EMBL" id="CP000937">
    <property type="protein sequence ID" value="ABZ86554.1"/>
    <property type="molecule type" value="Genomic_DNA"/>
</dbReference>
<dbReference type="SMR" id="B0TZJ5"/>
<dbReference type="KEGG" id="fph:Fphi_0337"/>
<dbReference type="eggNOG" id="COG1003">
    <property type="taxonomic scope" value="Bacteria"/>
</dbReference>
<dbReference type="HOGENOM" id="CLU_004620_5_0_6"/>
<dbReference type="GO" id="GO:0005829">
    <property type="term" value="C:cytosol"/>
    <property type="evidence" value="ECO:0007669"/>
    <property type="project" value="TreeGrafter"/>
</dbReference>
<dbReference type="GO" id="GO:0005960">
    <property type="term" value="C:glycine cleavage complex"/>
    <property type="evidence" value="ECO:0007669"/>
    <property type="project" value="TreeGrafter"/>
</dbReference>
<dbReference type="GO" id="GO:0016594">
    <property type="term" value="F:glycine binding"/>
    <property type="evidence" value="ECO:0007669"/>
    <property type="project" value="TreeGrafter"/>
</dbReference>
<dbReference type="GO" id="GO:0004375">
    <property type="term" value="F:glycine dehydrogenase (decarboxylating) activity"/>
    <property type="evidence" value="ECO:0007669"/>
    <property type="project" value="UniProtKB-EC"/>
</dbReference>
<dbReference type="GO" id="GO:0030170">
    <property type="term" value="F:pyridoxal phosphate binding"/>
    <property type="evidence" value="ECO:0007669"/>
    <property type="project" value="TreeGrafter"/>
</dbReference>
<dbReference type="GO" id="GO:0019464">
    <property type="term" value="P:glycine decarboxylation via glycine cleavage system"/>
    <property type="evidence" value="ECO:0007669"/>
    <property type="project" value="UniProtKB-UniRule"/>
</dbReference>
<dbReference type="FunFam" id="3.40.640.10:FF:000224">
    <property type="entry name" value="Probable glycine dehydrogenase (decarboxylating) subunit 2"/>
    <property type="match status" value="1"/>
</dbReference>
<dbReference type="Gene3D" id="6.20.440.10">
    <property type="match status" value="1"/>
</dbReference>
<dbReference type="Gene3D" id="3.90.1150.10">
    <property type="entry name" value="Aspartate Aminotransferase, domain 1"/>
    <property type="match status" value="1"/>
</dbReference>
<dbReference type="Gene3D" id="3.40.640.10">
    <property type="entry name" value="Type I PLP-dependent aspartate aminotransferase-like (Major domain)"/>
    <property type="match status" value="1"/>
</dbReference>
<dbReference type="HAMAP" id="MF_00713">
    <property type="entry name" value="GcvPB"/>
    <property type="match status" value="1"/>
</dbReference>
<dbReference type="InterPro" id="IPR023012">
    <property type="entry name" value="GcvPB"/>
</dbReference>
<dbReference type="InterPro" id="IPR049316">
    <property type="entry name" value="GDC-P_C"/>
</dbReference>
<dbReference type="InterPro" id="IPR049315">
    <property type="entry name" value="GDC-P_N"/>
</dbReference>
<dbReference type="InterPro" id="IPR020581">
    <property type="entry name" value="GDC_P"/>
</dbReference>
<dbReference type="InterPro" id="IPR015424">
    <property type="entry name" value="PyrdxlP-dep_Trfase"/>
</dbReference>
<dbReference type="InterPro" id="IPR015421">
    <property type="entry name" value="PyrdxlP-dep_Trfase_major"/>
</dbReference>
<dbReference type="InterPro" id="IPR015422">
    <property type="entry name" value="PyrdxlP-dep_Trfase_small"/>
</dbReference>
<dbReference type="NCBIfam" id="NF003346">
    <property type="entry name" value="PRK04366.1"/>
    <property type="match status" value="1"/>
</dbReference>
<dbReference type="PANTHER" id="PTHR11773:SF1">
    <property type="entry name" value="GLYCINE DEHYDROGENASE (DECARBOXYLATING), MITOCHONDRIAL"/>
    <property type="match status" value="1"/>
</dbReference>
<dbReference type="PANTHER" id="PTHR11773">
    <property type="entry name" value="GLYCINE DEHYDROGENASE, DECARBOXYLATING"/>
    <property type="match status" value="1"/>
</dbReference>
<dbReference type="Pfam" id="PF21478">
    <property type="entry name" value="GcvP2_C"/>
    <property type="match status" value="1"/>
</dbReference>
<dbReference type="Pfam" id="PF02347">
    <property type="entry name" value="GDC-P"/>
    <property type="match status" value="1"/>
</dbReference>
<dbReference type="SUPFAM" id="SSF53383">
    <property type="entry name" value="PLP-dependent transferases"/>
    <property type="match status" value="1"/>
</dbReference>
<name>GCSPB_FRAP2</name>
<evidence type="ECO:0000255" key="1">
    <source>
        <dbReference type="HAMAP-Rule" id="MF_00713"/>
    </source>
</evidence>
<evidence type="ECO:0000256" key="2">
    <source>
        <dbReference type="SAM" id="MobiDB-lite"/>
    </source>
</evidence>
<organism>
    <name type="scientific">Francisella philomiragia subsp. philomiragia (strain ATCC 25017 / CCUG 19701 / FSC 153 / O#319-036)</name>
    <dbReference type="NCBI Taxonomy" id="484022"/>
    <lineage>
        <taxon>Bacteria</taxon>
        <taxon>Pseudomonadati</taxon>
        <taxon>Pseudomonadota</taxon>
        <taxon>Gammaproteobacteria</taxon>
        <taxon>Thiotrichales</taxon>
        <taxon>Francisellaceae</taxon>
        <taxon>Francisella</taxon>
    </lineage>
</organism>
<sequence>MVIFEKTRGKNSPSVMPSKKGDVSNIPANMLRSKKPILPEQAELDVVRHYTQLSRKNFCIDTNFYPLGSCTMKYNPRAAHKYASLAGFLERHPYASAQSVQGTLECLYDLQNLIKELTGMTGVSLAPMAGAQGEFAGVAMIKAYHHKRGDFERDEIIVPDAAHGTNPATAKVCGLKVIEIPTKKDGDIDIEALDKVLGPKTAGIMLTNPSTVGVFERNIAVIAKKVHEAGGLLYYDGANLNAIMGKARPGDMGFDVLHMNLHKTFATPHGGGGPGAGPVAVNDKLKEFLPVPMVGKKADKFVWLEEKDVPNTIGRLSAFNGNIGVLIRAYIYGAMLGGNGLTEASKIATLNANYMMARLKQEGFTIAYPERRASHEFIVTLKPEFQNYGVTATDFAKCLIDRGVHAPTMYFPLLVPECLLIEPTETENVDSMEKFIQAMVEIRDIAKKDPQYLKGAPYNLPARRLDDVKAAKELDIVWQPK</sequence>
<keyword id="KW-0560">Oxidoreductase</keyword>
<keyword id="KW-0663">Pyridoxal phosphate</keyword>
<protein>
    <recommendedName>
        <fullName evidence="1">Probable glycine dehydrogenase (decarboxylating) subunit 2</fullName>
        <ecNumber evidence="1">1.4.4.2</ecNumber>
    </recommendedName>
    <alternativeName>
        <fullName evidence="1">Glycine cleavage system P-protein subunit 2</fullName>
    </alternativeName>
    <alternativeName>
        <fullName evidence="1">Glycine decarboxylase subunit 2</fullName>
    </alternativeName>
    <alternativeName>
        <fullName evidence="1">Glycine dehydrogenase (aminomethyl-transferring) subunit 2</fullName>
    </alternativeName>
</protein>
<feature type="chain" id="PRO_1000083230" description="Probable glycine dehydrogenase (decarboxylating) subunit 2">
    <location>
        <begin position="1"/>
        <end position="481"/>
    </location>
</feature>
<feature type="region of interest" description="Disordered" evidence="2">
    <location>
        <begin position="1"/>
        <end position="23"/>
    </location>
</feature>
<feature type="modified residue" description="N6-(pyridoxal phosphate)lysine" evidence="1">
    <location>
        <position position="263"/>
    </location>
</feature>
<accession>B0TZJ5</accession>